<feature type="chain" id="PRO_0000086503" description="3-phosphoinositide-dependent protein kinase 1">
    <location>
        <begin position="1"/>
        <end position="636"/>
    </location>
</feature>
<feature type="domain" description="Protein kinase" evidence="4">
    <location>
        <begin position="69"/>
        <end position="364"/>
    </location>
</feature>
<feature type="region of interest" description="Disordered" evidence="6">
    <location>
        <begin position="1"/>
        <end position="45"/>
    </location>
</feature>
<feature type="region of interest" description="PIF-pocket" evidence="2">
    <location>
        <begin position="100"/>
        <end position="149"/>
    </location>
</feature>
<feature type="region of interest" description="Disordered" evidence="6">
    <location>
        <begin position="233"/>
        <end position="264"/>
    </location>
</feature>
<feature type="region of interest" description="Disordered" evidence="6">
    <location>
        <begin position="593"/>
        <end position="636"/>
    </location>
</feature>
<feature type="coiled-coil region" evidence="3">
    <location>
        <begin position="550"/>
        <end position="631"/>
    </location>
</feature>
<feature type="compositionally biased region" description="Low complexity" evidence="6">
    <location>
        <begin position="1"/>
        <end position="20"/>
    </location>
</feature>
<feature type="compositionally biased region" description="Low complexity" evidence="6">
    <location>
        <begin position="27"/>
        <end position="37"/>
    </location>
</feature>
<feature type="compositionally biased region" description="Basic and acidic residues" evidence="6">
    <location>
        <begin position="597"/>
        <end position="624"/>
    </location>
</feature>
<feature type="active site" description="Proton acceptor" evidence="4 5">
    <location>
        <position position="197"/>
    </location>
</feature>
<feature type="binding site" evidence="2">
    <location>
        <begin position="79"/>
        <end position="81"/>
    </location>
    <ligand>
        <name>ATP</name>
        <dbReference type="ChEBI" id="CHEBI:30616"/>
    </ligand>
</feature>
<feature type="binding site" evidence="2">
    <location>
        <position position="98"/>
    </location>
    <ligand>
        <name>ATP</name>
        <dbReference type="ChEBI" id="CHEBI:30616"/>
    </ligand>
</feature>
<feature type="binding site" evidence="2">
    <location>
        <begin position="152"/>
        <end position="154"/>
    </location>
    <ligand>
        <name>ATP</name>
        <dbReference type="ChEBI" id="CHEBI:30616"/>
    </ligand>
</feature>
<feature type="binding site" evidence="2">
    <location>
        <position position="158"/>
    </location>
    <ligand>
        <name>ATP</name>
        <dbReference type="ChEBI" id="CHEBI:30616"/>
    </ligand>
</feature>
<feature type="binding site" evidence="2">
    <location>
        <position position="201"/>
    </location>
    <ligand>
        <name>ATP</name>
        <dbReference type="ChEBI" id="CHEBI:30616"/>
    </ligand>
</feature>
<feature type="binding site" evidence="2">
    <location>
        <position position="215"/>
    </location>
    <ligand>
        <name>ATP</name>
        <dbReference type="ChEBI" id="CHEBI:30616"/>
    </ligand>
</feature>
<feature type="splice variant" id="VSP_017049" description="In isoform b." evidence="12">
    <location>
        <begin position="259"/>
        <end position="260"/>
    </location>
</feature>
<feature type="splice variant" id="VSP_017050" description="In isoform b." evidence="12">
    <location>
        <begin position="427"/>
        <end position="428"/>
    </location>
</feature>
<feature type="mutagenesis site" description="In sa709; increased resistance to oxidative stress induced by paraquat. daf-16 mainly localizes to the nucleus as opposed to the cytoplasm as it does in wild-type." evidence="10">
    <original>Y</original>
    <variation>C</variation>
    <location>
        <position position="148"/>
    </location>
</feature>
<feature type="mutagenesis site" description="In sa680; developmental arrest at dauer stage, extended life span, increased body size, low fertility, and defects in egg-laying and social behavior. Fails to avoid NaCl after exposure to NaCl under starvation conditions. Restores normal AIY interneuron neurite outgrowth in a daf-18 (mg198) background mutant." evidence="7 9 11">
    <original>G</original>
    <variation>R</variation>
    <location>
        <position position="297"/>
    </location>
</feature>
<feature type="mutagenesis site" description="In mg142; no obvious phenotype." evidence="7">
    <original>A</original>
    <variation>V</variation>
    <location>
        <position position="305"/>
    </location>
</feature>
<sequence length="636" mass="71917">MEDLTPTNTSLDTTTTNNDTTSDREAAPTTLNLTPTASESENSLSPVTAEDLIAKSIKEGCPKRTSNDFMFLQSMGEGAYSQVFRCREVATDAMFAVKVLQKSYLNRHQKMDAIIREKNILTYLSQECGGHPFVTQLYTHFHDQARIYFVIGLVENGDLGESLCHFGSFDMLTSKFFASEILTGLQFLHDNKIVHRDMKPDNVLIQKDGHILITDFGSAQAFGGLQLSQEGFTDANQASSRSSDSGSPPPTRFYSDEEVPEENTARRTTFVGTALYVSPEMLADGDVGPQTDIWGLGCILFQCLAGQPPFRAVNQYHLLKRIQELDFSFPEGFPEEASEIIAKILVRDPSTRITSQELMAHKFFENVDWVNIANIKPPVLHAYIPATFGEPEYYSNIGPVEPGLDDRALFRLMNLGNDASASQPSTFRPSNVEHRGDPFVSEIAPRANSEAEKNRAARAQKLEEQRVKNPFHIFTNNSLILKQGYLEKKRGLFARRRMFLLTEGPHLLYIDVPNLVLKGEVPWTPCMQVELKNSGTFFIHTPNRVYYLFDLEKKADEWCKAINDVRKRYSVTIEKTFNSAMRDGTFGSIYGKKKSRKEMMREQKALRRKQEKEEKKALKAEQVSKKLSMQMDKKSP</sequence>
<gene>
    <name evidence="14" type="primary">pdk-1</name>
    <name evidence="14" type="ORF">H42K12.1</name>
</gene>
<proteinExistence type="evidence at protein level"/>
<evidence type="ECO:0000250" key="1"/>
<evidence type="ECO:0000250" key="2">
    <source>
        <dbReference type="UniProtKB" id="O15530"/>
    </source>
</evidence>
<evidence type="ECO:0000255" key="3"/>
<evidence type="ECO:0000255" key="4">
    <source>
        <dbReference type="PROSITE-ProRule" id="PRU00159"/>
    </source>
</evidence>
<evidence type="ECO:0000255" key="5">
    <source>
        <dbReference type="PROSITE-ProRule" id="PRU10027"/>
    </source>
</evidence>
<evidence type="ECO:0000256" key="6">
    <source>
        <dbReference type="SAM" id="MobiDB-lite"/>
    </source>
</evidence>
<evidence type="ECO:0000269" key="7">
    <source>
    </source>
</evidence>
<evidence type="ECO:0000269" key="8">
    <source>
    </source>
</evidence>
<evidence type="ECO:0000269" key="9">
    <source>
    </source>
</evidence>
<evidence type="ECO:0000269" key="10">
    <source>
    </source>
</evidence>
<evidence type="ECO:0000269" key="11">
    <source>
    </source>
</evidence>
<evidence type="ECO:0000303" key="12">
    <source>
    </source>
</evidence>
<evidence type="ECO:0000305" key="13"/>
<evidence type="ECO:0000312" key="14">
    <source>
        <dbReference type="WormBase" id="H42K12.1a"/>
    </source>
</evidence>
<evidence type="ECO:0000312" key="15">
    <source>
        <dbReference type="WormBase" id="H42K12.1b"/>
    </source>
</evidence>
<organism>
    <name type="scientific">Caenorhabditis elegans</name>
    <dbReference type="NCBI Taxonomy" id="6239"/>
    <lineage>
        <taxon>Eukaryota</taxon>
        <taxon>Metazoa</taxon>
        <taxon>Ecdysozoa</taxon>
        <taxon>Nematoda</taxon>
        <taxon>Chromadorea</taxon>
        <taxon>Rhabditida</taxon>
        <taxon>Rhabditina</taxon>
        <taxon>Rhabditomorpha</taxon>
        <taxon>Rhabditoidea</taxon>
        <taxon>Rhabditidae</taxon>
        <taxon>Peloderinae</taxon>
        <taxon>Caenorhabditis</taxon>
    </lineage>
</organism>
<protein>
    <recommendedName>
        <fullName>3-phosphoinositide-dependent protein kinase 1</fullName>
        <ecNumber>2.7.11.1</ecNumber>
    </recommendedName>
    <alternativeName>
        <fullName>Pdk-class protein kinase 1</fullName>
    </alternativeName>
</protein>
<accession>Q9Y1J3</accession>
<accession>Q9UA36</accession>
<dbReference type="EC" id="2.7.11.1"/>
<dbReference type="EMBL" id="AF130406">
    <property type="protein sequence ID" value="AAD42307.1"/>
    <property type="molecule type" value="mRNA"/>
</dbReference>
<dbReference type="EMBL" id="AF130407">
    <property type="protein sequence ID" value="AAD42308.1"/>
    <property type="molecule type" value="mRNA"/>
</dbReference>
<dbReference type="EMBL" id="BX284606">
    <property type="protein sequence ID" value="CCD67851.1"/>
    <property type="molecule type" value="Genomic_DNA"/>
</dbReference>
<dbReference type="EMBL" id="BX284606">
    <property type="protein sequence ID" value="CCD67852.1"/>
    <property type="molecule type" value="Genomic_DNA"/>
</dbReference>
<dbReference type="RefSeq" id="NP_001024742.1">
    <molecule id="Q9Y1J3-2"/>
    <property type="nucleotide sequence ID" value="NM_001029571.4"/>
</dbReference>
<dbReference type="RefSeq" id="NP_001024743.1">
    <molecule id="Q9Y1J3-1"/>
    <property type="nucleotide sequence ID" value="NM_001029572.4"/>
</dbReference>
<dbReference type="SMR" id="Q9Y1J3"/>
<dbReference type="BioGRID" id="45427">
    <property type="interactions" value="5"/>
</dbReference>
<dbReference type="DIP" id="DIP-27322N"/>
<dbReference type="FunCoup" id="Q9Y1J3">
    <property type="interactions" value="2698"/>
</dbReference>
<dbReference type="IntAct" id="Q9Y1J3">
    <property type="interactions" value="3"/>
</dbReference>
<dbReference type="STRING" id="6239.H42K12.1b.1"/>
<dbReference type="iPTMnet" id="Q9Y1J3"/>
<dbReference type="PaxDb" id="6239-H42K12.1b"/>
<dbReference type="PeptideAtlas" id="Q9Y1J3"/>
<dbReference type="EnsemblMetazoa" id="H42K12.1a.1">
    <molecule id="Q9Y1J3-2"/>
    <property type="protein sequence ID" value="H42K12.1a.1"/>
    <property type="gene ID" value="WBGene00003965"/>
</dbReference>
<dbReference type="EnsemblMetazoa" id="H42K12.1b.1">
    <molecule id="Q9Y1J3-1"/>
    <property type="protein sequence ID" value="H42K12.1b.1"/>
    <property type="gene ID" value="WBGene00003965"/>
</dbReference>
<dbReference type="GeneID" id="180475"/>
<dbReference type="KEGG" id="cel:CELE_H42K12.1"/>
<dbReference type="UCSC" id="H42K12.1b">
    <molecule id="Q9Y1J3-1"/>
    <property type="organism name" value="c. elegans"/>
</dbReference>
<dbReference type="AGR" id="WB:WBGene00003965"/>
<dbReference type="CTD" id="180475"/>
<dbReference type="WormBase" id="H42K12.1a">
    <molecule id="Q9Y1J3-2"/>
    <property type="protein sequence ID" value="CE28739"/>
    <property type="gene ID" value="WBGene00003965"/>
    <property type="gene designation" value="pdk-1"/>
</dbReference>
<dbReference type="WormBase" id="H42K12.1b">
    <molecule id="Q9Y1J3-1"/>
    <property type="protein sequence ID" value="CE28740"/>
    <property type="gene ID" value="WBGene00003965"/>
    <property type="gene designation" value="pdk-1"/>
</dbReference>
<dbReference type="eggNOG" id="KOG0592">
    <property type="taxonomic scope" value="Eukaryota"/>
</dbReference>
<dbReference type="GeneTree" id="ENSGT00940000155267"/>
<dbReference type="InParanoid" id="Q9Y1J3"/>
<dbReference type="OMA" id="ADEWCKA"/>
<dbReference type="OrthoDB" id="347657at2759"/>
<dbReference type="PhylomeDB" id="Q9Y1J3"/>
<dbReference type="SignaLink" id="Q9Y1J3"/>
<dbReference type="PRO" id="PR:Q9Y1J3"/>
<dbReference type="Proteomes" id="UP000001940">
    <property type="component" value="Chromosome X"/>
</dbReference>
<dbReference type="Bgee" id="WBGene00003965">
    <property type="expression patterns" value="Expressed in embryo and 4 other cell types or tissues"/>
</dbReference>
<dbReference type="GO" id="GO:0030424">
    <property type="term" value="C:axon"/>
    <property type="evidence" value="ECO:0000314"/>
    <property type="project" value="WormBase"/>
</dbReference>
<dbReference type="GO" id="GO:0005737">
    <property type="term" value="C:cytoplasm"/>
    <property type="evidence" value="ECO:0007669"/>
    <property type="project" value="UniProtKB-SubCell"/>
</dbReference>
<dbReference type="GO" id="GO:0043025">
    <property type="term" value="C:neuronal cell body"/>
    <property type="evidence" value="ECO:0000314"/>
    <property type="project" value="WormBase"/>
</dbReference>
<dbReference type="GO" id="GO:0005634">
    <property type="term" value="C:nucleus"/>
    <property type="evidence" value="ECO:0000314"/>
    <property type="project" value="WormBase"/>
</dbReference>
<dbReference type="GO" id="GO:0005524">
    <property type="term" value="F:ATP binding"/>
    <property type="evidence" value="ECO:0007669"/>
    <property type="project" value="UniProtKB-KW"/>
</dbReference>
<dbReference type="GO" id="GO:0106310">
    <property type="term" value="F:protein serine kinase activity"/>
    <property type="evidence" value="ECO:0007669"/>
    <property type="project" value="RHEA"/>
</dbReference>
<dbReference type="GO" id="GO:0004674">
    <property type="term" value="F:protein serine/threonine kinase activity"/>
    <property type="evidence" value="ECO:0000314"/>
    <property type="project" value="WormBase"/>
</dbReference>
<dbReference type="GO" id="GO:0071248">
    <property type="term" value="P:cellular response to metal ion"/>
    <property type="evidence" value="ECO:0000315"/>
    <property type="project" value="UniProtKB"/>
</dbReference>
<dbReference type="GO" id="GO:0034614">
    <property type="term" value="P:cellular response to reactive oxygen species"/>
    <property type="evidence" value="ECO:0000315"/>
    <property type="project" value="UniProtKB"/>
</dbReference>
<dbReference type="GO" id="GO:0040024">
    <property type="term" value="P:dauer larval development"/>
    <property type="evidence" value="ECO:0000315"/>
    <property type="project" value="WormBase"/>
</dbReference>
<dbReference type="GO" id="GO:0035556">
    <property type="term" value="P:intracellular signal transduction"/>
    <property type="evidence" value="ECO:0000318"/>
    <property type="project" value="GO_Central"/>
</dbReference>
<dbReference type="GO" id="GO:0007611">
    <property type="term" value="P:learning or memory"/>
    <property type="evidence" value="ECO:0000315"/>
    <property type="project" value="WormBase"/>
</dbReference>
<dbReference type="GO" id="GO:0050920">
    <property type="term" value="P:regulation of chemotaxis"/>
    <property type="evidence" value="ECO:0000315"/>
    <property type="project" value="WormBase"/>
</dbReference>
<dbReference type="GO" id="GO:0008582">
    <property type="term" value="P:regulation of synaptic assembly at neuromuscular junction"/>
    <property type="evidence" value="ECO:0000316"/>
    <property type="project" value="UniProtKB"/>
</dbReference>
<dbReference type="CDD" id="cd01262">
    <property type="entry name" value="PH_PDK1"/>
    <property type="match status" value="1"/>
</dbReference>
<dbReference type="CDD" id="cd05581">
    <property type="entry name" value="STKc_PDK1"/>
    <property type="match status" value="1"/>
</dbReference>
<dbReference type="FunFam" id="3.30.200.20:FF:001188">
    <property type="entry name" value="3-phosphoinositide-dependent protein kinase 1"/>
    <property type="match status" value="1"/>
</dbReference>
<dbReference type="FunFam" id="1.10.510.10:FF:000764">
    <property type="entry name" value="AGC/PDK1 protein kinase, variant 1"/>
    <property type="match status" value="1"/>
</dbReference>
<dbReference type="FunFam" id="2.30.29.30:FF:000324">
    <property type="entry name" value="Phosphoinositide-dependent kinase 1, isoform F"/>
    <property type="match status" value="1"/>
</dbReference>
<dbReference type="Gene3D" id="3.30.200.20">
    <property type="entry name" value="Phosphorylase Kinase, domain 1"/>
    <property type="match status" value="1"/>
</dbReference>
<dbReference type="Gene3D" id="2.30.29.30">
    <property type="entry name" value="Pleckstrin-homology domain (PH domain)/Phosphotyrosine-binding domain (PTB)"/>
    <property type="match status" value="1"/>
</dbReference>
<dbReference type="Gene3D" id="1.10.510.10">
    <property type="entry name" value="Transferase(Phosphotransferase) domain 1"/>
    <property type="match status" value="1"/>
</dbReference>
<dbReference type="InterPro" id="IPR011009">
    <property type="entry name" value="Kinase-like_dom_sf"/>
</dbReference>
<dbReference type="InterPro" id="IPR033931">
    <property type="entry name" value="PDK1-typ_PH"/>
</dbReference>
<dbReference type="InterPro" id="IPR039046">
    <property type="entry name" value="PDPK1"/>
</dbReference>
<dbReference type="InterPro" id="IPR011993">
    <property type="entry name" value="PH-like_dom_sf"/>
</dbReference>
<dbReference type="InterPro" id="IPR001849">
    <property type="entry name" value="PH_domain"/>
</dbReference>
<dbReference type="InterPro" id="IPR000719">
    <property type="entry name" value="Prot_kinase_dom"/>
</dbReference>
<dbReference type="InterPro" id="IPR008271">
    <property type="entry name" value="Ser/Thr_kinase_AS"/>
</dbReference>
<dbReference type="InterPro" id="IPR050236">
    <property type="entry name" value="Ser_Thr_kinase_AGC"/>
</dbReference>
<dbReference type="PANTHER" id="PTHR24356:SF406">
    <property type="entry name" value="3-PHOSPHOINOSITIDE-DEPENDENT PROTEIN KINASE 1"/>
    <property type="match status" value="1"/>
</dbReference>
<dbReference type="PANTHER" id="PTHR24356">
    <property type="entry name" value="SERINE/THREONINE-PROTEIN KINASE"/>
    <property type="match status" value="1"/>
</dbReference>
<dbReference type="Pfam" id="PF14593">
    <property type="entry name" value="PH_3"/>
    <property type="match status" value="1"/>
</dbReference>
<dbReference type="Pfam" id="PF00069">
    <property type="entry name" value="Pkinase"/>
    <property type="match status" value="2"/>
</dbReference>
<dbReference type="SMART" id="SM00233">
    <property type="entry name" value="PH"/>
    <property type="match status" value="1"/>
</dbReference>
<dbReference type="SMART" id="SM00220">
    <property type="entry name" value="S_TKc"/>
    <property type="match status" value="1"/>
</dbReference>
<dbReference type="SUPFAM" id="SSF50729">
    <property type="entry name" value="PH domain-like"/>
    <property type="match status" value="1"/>
</dbReference>
<dbReference type="SUPFAM" id="SSF56112">
    <property type="entry name" value="Protein kinase-like (PK-like)"/>
    <property type="match status" value="1"/>
</dbReference>
<dbReference type="PROSITE" id="PS50011">
    <property type="entry name" value="PROTEIN_KINASE_DOM"/>
    <property type="match status" value="1"/>
</dbReference>
<dbReference type="PROSITE" id="PS00108">
    <property type="entry name" value="PROTEIN_KINASE_ST"/>
    <property type="match status" value="1"/>
</dbReference>
<comment type="function">
    <text evidence="7 8 10">Involved in the daf-2/insulin receptor-like transduction pathway, which controls longevity and prevents developmental arrest at the dauer stage (PubMed:10364160, PubMed:21980302). Phosphorylates and activates sgk-1, akt-1 and akt-2 (PubMed:15068796).</text>
</comment>
<comment type="catalytic activity">
    <reaction>
        <text>L-seryl-[protein] + ATP = O-phospho-L-seryl-[protein] + ADP + H(+)</text>
        <dbReference type="Rhea" id="RHEA:17989"/>
        <dbReference type="Rhea" id="RHEA-COMP:9863"/>
        <dbReference type="Rhea" id="RHEA-COMP:11604"/>
        <dbReference type="ChEBI" id="CHEBI:15378"/>
        <dbReference type="ChEBI" id="CHEBI:29999"/>
        <dbReference type="ChEBI" id="CHEBI:30616"/>
        <dbReference type="ChEBI" id="CHEBI:83421"/>
        <dbReference type="ChEBI" id="CHEBI:456216"/>
        <dbReference type="EC" id="2.7.11.1"/>
    </reaction>
</comment>
<comment type="catalytic activity">
    <reaction>
        <text>L-threonyl-[protein] + ATP = O-phospho-L-threonyl-[protein] + ADP + H(+)</text>
        <dbReference type="Rhea" id="RHEA:46608"/>
        <dbReference type="Rhea" id="RHEA-COMP:11060"/>
        <dbReference type="Rhea" id="RHEA-COMP:11605"/>
        <dbReference type="ChEBI" id="CHEBI:15378"/>
        <dbReference type="ChEBI" id="CHEBI:30013"/>
        <dbReference type="ChEBI" id="CHEBI:30616"/>
        <dbReference type="ChEBI" id="CHEBI:61977"/>
        <dbReference type="ChEBI" id="CHEBI:456216"/>
        <dbReference type="EC" id="2.7.11.1"/>
    </reaction>
</comment>
<comment type="subunit">
    <text evidence="8">Interacts directly with sgk-1, akt-1 and akt-2.</text>
</comment>
<comment type="subcellular location">
    <subcellularLocation>
        <location evidence="1">Cytoplasm</location>
    </subcellularLocation>
</comment>
<comment type="alternative products">
    <event type="alternative splicing"/>
    <isoform>
        <id>Q9Y1J3-1</id>
        <name evidence="14">a</name>
        <sequence type="displayed"/>
    </isoform>
    <isoform>
        <id>Q9Y1J3-2</id>
        <name evidence="15">b</name>
        <sequence type="described" ref="VSP_017049 VSP_017050"/>
    </isoform>
</comment>
<comment type="developmental stage">
    <text evidence="7">Expressed in late stage embryos and throughout life. At L1, expressed in neurons, intestinal cells and hypodermal cells. In adults, expressed in the somatic gonad.</text>
</comment>
<comment type="domain">
    <text evidence="2">The PIF-pocket is a small lobe in the catalytic domain required by the enzyme for the binding to the hydrophobic motif of its substrates. It is an allosteric regulatory site that can accommodate small compounds acting as allosteric inhibitors.</text>
</comment>
<comment type="similarity">
    <text evidence="13">Belongs to the protein kinase superfamily. AGC Ser/Thr protein kinase family. PDPK1 subfamily.</text>
</comment>
<keyword id="KW-0025">Alternative splicing</keyword>
<keyword id="KW-0067">ATP-binding</keyword>
<keyword id="KW-0175">Coiled coil</keyword>
<keyword id="KW-0963">Cytoplasm</keyword>
<keyword id="KW-0217">Developmental protein</keyword>
<keyword id="KW-0418">Kinase</keyword>
<keyword id="KW-0547">Nucleotide-binding</keyword>
<keyword id="KW-1185">Reference proteome</keyword>
<keyword id="KW-0723">Serine/threonine-protein kinase</keyword>
<keyword id="KW-0808">Transferase</keyword>
<name>PDPK1_CAEEL</name>
<reference key="1">
    <citation type="journal article" date="1999" name="Genes Dev.">
        <title>A PDK1 homolog is necessary and sufficient to transduce AGE-1 PI3 kinase signals that regulate diapause in Caenorhabditis elegans.</title>
        <authorList>
            <person name="Paradis S."/>
            <person name="Ailion M."/>
            <person name="Toker A."/>
            <person name="Thomas J.H."/>
            <person name="Ruvkun G."/>
        </authorList>
    </citation>
    <scope>NUCLEOTIDE SEQUENCE [MRNA] (ISOFORMS A AND B)</scope>
    <scope>MUTAGENESIS OF GLY-297 AND ALA-305</scope>
    <scope>DEVELOPMENTAL STAGE</scope>
    <scope>FUNCTION</scope>
    <source>
        <strain>Bristol N2</strain>
    </source>
</reference>
<reference key="2">
    <citation type="journal article" date="1998" name="Science">
        <title>Genome sequence of the nematode C. elegans: a platform for investigating biology.</title>
        <authorList>
            <consortium name="The C. elegans sequencing consortium"/>
        </authorList>
    </citation>
    <scope>NUCLEOTIDE SEQUENCE [LARGE SCALE GENOMIC DNA]</scope>
    <source>
        <strain>Bristol N2</strain>
    </source>
</reference>
<reference key="3">
    <citation type="journal article" date="2004" name="Dev. Cell">
        <title>C. elegans SGK-1 is the critical component in the Akt/PKB kinase complex to control stress response and life span.</title>
        <authorList>
            <person name="Hertweck M."/>
            <person name="Goebel C."/>
            <person name="Baumeister R."/>
        </authorList>
    </citation>
    <scope>FUNCTION</scope>
    <scope>INTERACTION WITH SGK-1; AKT-1 AND AKT-2</scope>
</reference>
<reference key="4">
    <citation type="journal article" date="2006" name="Neuron">
        <title>The insulin/PI 3-kinase pathway regulates salt chemotaxis learning in Caenorhabditis elegans.</title>
        <authorList>
            <person name="Tomioka M."/>
            <person name="Adachi T."/>
            <person name="Suzuki H."/>
            <person name="Kunitomo H."/>
            <person name="Schafer W.R."/>
            <person name="Iino Y."/>
        </authorList>
    </citation>
    <scope>MUTAGENESIS OF GLY-297</scope>
</reference>
<reference key="5">
    <citation type="journal article" date="2011" name="Development">
        <title>A conserved PTEN/FOXO pathway regulates neuronal morphology during C. elegans development.</title>
        <authorList>
            <person name="Christensen R."/>
            <person name="de la Torre-Ubieta L."/>
            <person name="Bonni A."/>
            <person name="Colon-Ramos D.A."/>
        </authorList>
    </citation>
    <scope>MUTAGENESIS OF GLY-297</scope>
</reference>
<reference key="6">
    <citation type="journal article" date="2011" name="PLoS Genet.">
        <title>A conserved PHD finger protein and endogenous RNAi modulate insulin signaling in Caenorhabditis elegans.</title>
        <authorList>
            <person name="Mansisidor A.R."/>
            <person name="Cecere G."/>
            <person name="Hoersch S."/>
            <person name="Jensen M.B."/>
            <person name="Kawli T."/>
            <person name="Kennedy L.M."/>
            <person name="Chavez V."/>
            <person name="Tan M.W."/>
            <person name="Lieb J.D."/>
            <person name="Grishok A."/>
        </authorList>
    </citation>
    <scope>FUNCTION</scope>
    <scope>MUTAGENESIS OF TYR-148</scope>
</reference>